<protein>
    <recommendedName>
        <fullName>Unknown protein NF042 from 2D-PAGE</fullName>
    </recommendedName>
</protein>
<organism evidence="1">
    <name type="scientific">Naegleria fowleri</name>
    <name type="common">Brain eating amoeba</name>
    <dbReference type="NCBI Taxonomy" id="5763"/>
    <lineage>
        <taxon>Eukaryota</taxon>
        <taxon>Discoba</taxon>
        <taxon>Heterolobosea</taxon>
        <taxon>Tetramitia</taxon>
        <taxon>Eutetramitia</taxon>
        <taxon>Vahlkampfiidae</taxon>
        <taxon>Naegleria</taxon>
    </lineage>
</organism>
<evidence type="ECO:0000305" key="1"/>
<feature type="chain" id="PRO_0000055497" description="Unknown protein NF042 from 2D-PAGE">
    <location>
        <begin position="1"/>
        <end position="20" status="greater than"/>
    </location>
</feature>
<feature type="non-terminal residue" evidence="1">
    <location>
        <position position="20"/>
    </location>
</feature>
<accession>P83730</accession>
<keyword id="KW-0903">Direct protein sequencing</keyword>
<proteinExistence type="evidence at protein level"/>
<reference evidence="1" key="1">
    <citation type="submission" date="2003-12" db="UniProtKB">
        <title>Comparative study of protein profiles on pathogenic and nonpathogenic Naegleria species by 2D-PAGE.</title>
        <authorList>
            <person name="Omura M."/>
            <person name="Furushima-Shimogawara R."/>
            <person name="Izumiyama S."/>
            <person name="Endo T."/>
        </authorList>
    </citation>
    <scope>PROTEIN SEQUENCE</scope>
    <source>
        <strain>ATCC 30214 / Nf 66</strain>
    </source>
</reference>
<sequence length="20" mass="1893">AGKLEGKVXLVTGAPSGIGK</sequence>
<comment type="miscellaneous">
    <text evidence="1">On the 2D-gel the determined MW of this unknown protein is: 25.0 kDa.</text>
</comment>
<name>NF42_NAEFO</name>